<comment type="subcellular location">
    <subcellularLocation>
        <location evidence="1">Cell membrane</location>
        <topology evidence="1">Multi-pass membrane protein</topology>
    </subcellularLocation>
</comment>
<comment type="similarity">
    <text evidence="1">Belongs to the UPF0114 family.</text>
</comment>
<feature type="chain" id="PRO_1000096266" description="UPF0114 protein YqhA">
    <location>
        <begin position="1"/>
        <end position="164"/>
    </location>
</feature>
<feature type="transmembrane region" description="Helical" evidence="1">
    <location>
        <begin position="15"/>
        <end position="35"/>
    </location>
</feature>
<feature type="transmembrane region" description="Helical" evidence="1">
    <location>
        <begin position="53"/>
        <end position="73"/>
    </location>
</feature>
<feature type="transmembrane region" description="Helical" evidence="1">
    <location>
        <begin position="136"/>
        <end position="156"/>
    </location>
</feature>
<protein>
    <recommendedName>
        <fullName evidence="1">UPF0114 protein YqhA</fullName>
    </recommendedName>
</protein>
<evidence type="ECO:0000255" key="1">
    <source>
        <dbReference type="HAMAP-Rule" id="MF_00143"/>
    </source>
</evidence>
<dbReference type="EMBL" id="AP009240">
    <property type="protein sequence ID" value="BAG78810.1"/>
    <property type="molecule type" value="Genomic_DNA"/>
</dbReference>
<dbReference type="RefSeq" id="WP_000439331.1">
    <property type="nucleotide sequence ID" value="NC_011415.1"/>
</dbReference>
<dbReference type="KEGG" id="ecy:ECSE_3286"/>
<dbReference type="HOGENOM" id="CLU_097887_1_1_6"/>
<dbReference type="Proteomes" id="UP000008199">
    <property type="component" value="Chromosome"/>
</dbReference>
<dbReference type="GO" id="GO:0005886">
    <property type="term" value="C:plasma membrane"/>
    <property type="evidence" value="ECO:0007669"/>
    <property type="project" value="UniProtKB-SubCell"/>
</dbReference>
<dbReference type="HAMAP" id="MF_00143">
    <property type="entry name" value="UPF0114"/>
    <property type="match status" value="1"/>
</dbReference>
<dbReference type="InterPro" id="IPR005134">
    <property type="entry name" value="UPF0114"/>
</dbReference>
<dbReference type="InterPro" id="IPR020761">
    <property type="entry name" value="UPF0114_bac"/>
</dbReference>
<dbReference type="NCBIfam" id="TIGR00645">
    <property type="entry name" value="HI0507"/>
    <property type="match status" value="1"/>
</dbReference>
<dbReference type="PANTHER" id="PTHR38596">
    <property type="entry name" value="UPF0114 PROTEIN YQHA"/>
    <property type="match status" value="1"/>
</dbReference>
<dbReference type="PANTHER" id="PTHR38596:SF1">
    <property type="entry name" value="UPF0114 PROTEIN YQHA"/>
    <property type="match status" value="1"/>
</dbReference>
<dbReference type="Pfam" id="PF03350">
    <property type="entry name" value="UPF0114"/>
    <property type="match status" value="1"/>
</dbReference>
<organism>
    <name type="scientific">Escherichia coli (strain SE11)</name>
    <dbReference type="NCBI Taxonomy" id="409438"/>
    <lineage>
        <taxon>Bacteria</taxon>
        <taxon>Pseudomonadati</taxon>
        <taxon>Pseudomonadota</taxon>
        <taxon>Gammaproteobacteria</taxon>
        <taxon>Enterobacterales</taxon>
        <taxon>Enterobacteriaceae</taxon>
        <taxon>Escherichia</taxon>
    </lineage>
</organism>
<keyword id="KW-1003">Cell membrane</keyword>
<keyword id="KW-0472">Membrane</keyword>
<keyword id="KW-0812">Transmembrane</keyword>
<keyword id="KW-1133">Transmembrane helix</keyword>
<gene>
    <name evidence="1" type="primary">yqhA</name>
    <name type="ordered locus">ECSE_3286</name>
</gene>
<name>YQHA_ECOSE</name>
<reference key="1">
    <citation type="journal article" date="2008" name="DNA Res.">
        <title>Complete genome sequence and comparative analysis of the wild-type commensal Escherichia coli strain SE11 isolated from a healthy adult.</title>
        <authorList>
            <person name="Oshima K."/>
            <person name="Toh H."/>
            <person name="Ogura Y."/>
            <person name="Sasamoto H."/>
            <person name="Morita H."/>
            <person name="Park S.-H."/>
            <person name="Ooka T."/>
            <person name="Iyoda S."/>
            <person name="Taylor T.D."/>
            <person name="Hayashi T."/>
            <person name="Itoh K."/>
            <person name="Hattori M."/>
        </authorList>
    </citation>
    <scope>NUCLEOTIDE SEQUENCE [LARGE SCALE GENOMIC DNA]</scope>
    <source>
        <strain>SE11</strain>
    </source>
</reference>
<accession>B6I7F4</accession>
<proteinExistence type="inferred from homology"/>
<sequence>MERFLENAMYASRWLLAPVYFGLSLALVALALKFFQEIIHVLPNIFSMAESDLILVLLSLVDMTLVGGLLVMVMFSGYENFVSQLDISENKEKLNWLGKMDATSLKNKVAASIVAISSIHLLRVFMDAKNVPDNKLMWYVIIHLTFVLSAFVMGYLDRLTRHNH</sequence>